<keyword id="KW-1185">Reference proteome</keyword>
<keyword id="KW-0687">Ribonucleoprotein</keyword>
<keyword id="KW-0689">Ribosomal protein</keyword>
<keyword id="KW-0694">RNA-binding</keyword>
<keyword id="KW-0699">rRNA-binding</keyword>
<keyword id="KW-0820">tRNA-binding</keyword>
<organism>
    <name type="scientific">Thermosipho africanus (strain TCF52B)</name>
    <dbReference type="NCBI Taxonomy" id="484019"/>
    <lineage>
        <taxon>Bacteria</taxon>
        <taxon>Thermotogati</taxon>
        <taxon>Thermotogota</taxon>
        <taxon>Thermotogae</taxon>
        <taxon>Thermotogales</taxon>
        <taxon>Fervidobacteriaceae</taxon>
        <taxon>Thermosipho</taxon>
    </lineage>
</organism>
<gene>
    <name evidence="1" type="primary">rplE</name>
    <name type="ordered locus">THA_1227</name>
</gene>
<feature type="chain" id="PRO_1000142464" description="Large ribosomal subunit protein uL5">
    <location>
        <begin position="1"/>
        <end position="181"/>
    </location>
</feature>
<dbReference type="EMBL" id="CP001185">
    <property type="protein sequence ID" value="ACJ75672.1"/>
    <property type="molecule type" value="Genomic_DNA"/>
</dbReference>
<dbReference type="RefSeq" id="WP_004101462.1">
    <property type="nucleotide sequence ID" value="NC_011653.1"/>
</dbReference>
<dbReference type="SMR" id="B7IHV8"/>
<dbReference type="STRING" id="484019.THA_1227"/>
<dbReference type="KEGG" id="taf:THA_1227"/>
<dbReference type="eggNOG" id="COG0094">
    <property type="taxonomic scope" value="Bacteria"/>
</dbReference>
<dbReference type="HOGENOM" id="CLU_061015_2_1_0"/>
<dbReference type="OrthoDB" id="9806626at2"/>
<dbReference type="Proteomes" id="UP000002453">
    <property type="component" value="Chromosome"/>
</dbReference>
<dbReference type="GO" id="GO:1990904">
    <property type="term" value="C:ribonucleoprotein complex"/>
    <property type="evidence" value="ECO:0007669"/>
    <property type="project" value="UniProtKB-KW"/>
</dbReference>
<dbReference type="GO" id="GO:0005840">
    <property type="term" value="C:ribosome"/>
    <property type="evidence" value="ECO:0007669"/>
    <property type="project" value="UniProtKB-KW"/>
</dbReference>
<dbReference type="GO" id="GO:0019843">
    <property type="term" value="F:rRNA binding"/>
    <property type="evidence" value="ECO:0007669"/>
    <property type="project" value="UniProtKB-UniRule"/>
</dbReference>
<dbReference type="GO" id="GO:0003735">
    <property type="term" value="F:structural constituent of ribosome"/>
    <property type="evidence" value="ECO:0007669"/>
    <property type="project" value="InterPro"/>
</dbReference>
<dbReference type="GO" id="GO:0000049">
    <property type="term" value="F:tRNA binding"/>
    <property type="evidence" value="ECO:0007669"/>
    <property type="project" value="UniProtKB-UniRule"/>
</dbReference>
<dbReference type="GO" id="GO:0006412">
    <property type="term" value="P:translation"/>
    <property type="evidence" value="ECO:0007669"/>
    <property type="project" value="UniProtKB-UniRule"/>
</dbReference>
<dbReference type="FunFam" id="3.30.1440.10:FF:000001">
    <property type="entry name" value="50S ribosomal protein L5"/>
    <property type="match status" value="1"/>
</dbReference>
<dbReference type="Gene3D" id="3.30.1440.10">
    <property type="match status" value="1"/>
</dbReference>
<dbReference type="HAMAP" id="MF_01333_B">
    <property type="entry name" value="Ribosomal_uL5_B"/>
    <property type="match status" value="1"/>
</dbReference>
<dbReference type="InterPro" id="IPR002132">
    <property type="entry name" value="Ribosomal_uL5"/>
</dbReference>
<dbReference type="InterPro" id="IPR020930">
    <property type="entry name" value="Ribosomal_uL5_bac-type"/>
</dbReference>
<dbReference type="InterPro" id="IPR031309">
    <property type="entry name" value="Ribosomal_uL5_C"/>
</dbReference>
<dbReference type="InterPro" id="IPR020929">
    <property type="entry name" value="Ribosomal_uL5_CS"/>
</dbReference>
<dbReference type="InterPro" id="IPR022803">
    <property type="entry name" value="Ribosomal_uL5_dom_sf"/>
</dbReference>
<dbReference type="InterPro" id="IPR031310">
    <property type="entry name" value="Ribosomal_uL5_N"/>
</dbReference>
<dbReference type="NCBIfam" id="NF000585">
    <property type="entry name" value="PRK00010.1"/>
    <property type="match status" value="1"/>
</dbReference>
<dbReference type="PANTHER" id="PTHR11994">
    <property type="entry name" value="60S RIBOSOMAL PROTEIN L11-RELATED"/>
    <property type="match status" value="1"/>
</dbReference>
<dbReference type="Pfam" id="PF00281">
    <property type="entry name" value="Ribosomal_L5"/>
    <property type="match status" value="1"/>
</dbReference>
<dbReference type="Pfam" id="PF00673">
    <property type="entry name" value="Ribosomal_L5_C"/>
    <property type="match status" value="1"/>
</dbReference>
<dbReference type="PIRSF" id="PIRSF002161">
    <property type="entry name" value="Ribosomal_L5"/>
    <property type="match status" value="1"/>
</dbReference>
<dbReference type="SUPFAM" id="SSF55282">
    <property type="entry name" value="RL5-like"/>
    <property type="match status" value="1"/>
</dbReference>
<dbReference type="PROSITE" id="PS00358">
    <property type="entry name" value="RIBOSOMAL_L5"/>
    <property type="match status" value="1"/>
</dbReference>
<proteinExistence type="inferred from homology"/>
<name>RL5_THEAB</name>
<accession>B7IHV8</accession>
<reference key="1">
    <citation type="journal article" date="2009" name="J. Bacteriol.">
        <title>The genome of Thermosipho africanus TCF52B: lateral genetic connections to the Firmicutes and Archaea.</title>
        <authorList>
            <person name="Nesboe C.L."/>
            <person name="Bapteste E."/>
            <person name="Curtis B."/>
            <person name="Dahle H."/>
            <person name="Lopez P."/>
            <person name="Macleod D."/>
            <person name="Dlutek M."/>
            <person name="Bowman S."/>
            <person name="Zhaxybayeva O."/>
            <person name="Birkeland N.-K."/>
            <person name="Doolittle W.F."/>
        </authorList>
    </citation>
    <scope>NUCLEOTIDE SEQUENCE [LARGE SCALE GENOMIC DNA]</scope>
    <source>
        <strain>TCF52B</strain>
    </source>
</reference>
<protein>
    <recommendedName>
        <fullName evidence="1">Large ribosomal subunit protein uL5</fullName>
    </recommendedName>
    <alternativeName>
        <fullName evidence="2">50S ribosomal protein L5</fullName>
    </alternativeName>
</protein>
<sequence>MQYIPLKEKYENEIKPAMMKEFGYKNIHQVPRLEKIVINMGIGEGSRNKDVIDIHAKELALIAGQKPVVTKAKKSISNFKIRKGMPIGLKVTLRGVNMYNFLYKLINLVLPKVRDFRGLNPNGFDGRGNYSFGLTEQLVFPEISPDQVRRVQGMDIVIVTTAKTDDEARKLLELFGFPFKR</sequence>
<evidence type="ECO:0000255" key="1">
    <source>
        <dbReference type="HAMAP-Rule" id="MF_01333"/>
    </source>
</evidence>
<evidence type="ECO:0000305" key="2"/>
<comment type="function">
    <text evidence="1">This is one of the proteins that bind and probably mediate the attachment of the 5S RNA into the large ribosomal subunit, where it forms part of the central protuberance. In the 70S ribosome it contacts protein S13 of the 30S subunit (bridge B1b), connecting the 2 subunits; this bridge is implicated in subunit movement. Contacts the P site tRNA; the 5S rRNA and some of its associated proteins might help stabilize positioning of ribosome-bound tRNAs.</text>
</comment>
<comment type="subunit">
    <text evidence="1">Part of the 50S ribosomal subunit; part of the 5S rRNA/L5/L18/L25 subcomplex. Contacts the 5S rRNA and the P site tRNA. Forms a bridge to the 30S subunit in the 70S ribosome.</text>
</comment>
<comment type="similarity">
    <text evidence="1">Belongs to the universal ribosomal protein uL5 family.</text>
</comment>